<protein>
    <recommendedName>
        <fullName>ATP-dependent DNA helicase UvrD2</fullName>
        <ecNumber>5.6.2.4</ecNumber>
    </recommendedName>
    <alternativeName>
        <fullName evidence="6">DNA 3'-5' helicase UvrD2</fullName>
    </alternativeName>
</protein>
<proteinExistence type="inferred from homology"/>
<dbReference type="EC" id="5.6.2.4"/>
<dbReference type="EMBL" id="LT708304">
    <property type="protein sequence ID" value="SIU01850.1"/>
    <property type="molecule type" value="Genomic_DNA"/>
</dbReference>
<dbReference type="RefSeq" id="NP_856867.1">
    <property type="nucleotide sequence ID" value="NC_002945.3"/>
</dbReference>
<dbReference type="RefSeq" id="WP_003416822.1">
    <property type="nucleotide sequence ID" value="NC_002945.4"/>
</dbReference>
<dbReference type="SMR" id="P64321"/>
<dbReference type="GeneID" id="45427188"/>
<dbReference type="KEGG" id="mbo:BQ2027_MB3222C"/>
<dbReference type="PATRIC" id="fig|233413.5.peg.3548"/>
<dbReference type="Proteomes" id="UP000001419">
    <property type="component" value="Chromosome"/>
</dbReference>
<dbReference type="GO" id="GO:0005829">
    <property type="term" value="C:cytosol"/>
    <property type="evidence" value="ECO:0007669"/>
    <property type="project" value="TreeGrafter"/>
</dbReference>
<dbReference type="GO" id="GO:0033202">
    <property type="term" value="C:DNA helicase complex"/>
    <property type="evidence" value="ECO:0007669"/>
    <property type="project" value="TreeGrafter"/>
</dbReference>
<dbReference type="GO" id="GO:0043138">
    <property type="term" value="F:3'-5' DNA helicase activity"/>
    <property type="evidence" value="ECO:0007669"/>
    <property type="project" value="TreeGrafter"/>
</dbReference>
<dbReference type="GO" id="GO:0005524">
    <property type="term" value="F:ATP binding"/>
    <property type="evidence" value="ECO:0007669"/>
    <property type="project" value="UniProtKB-KW"/>
</dbReference>
<dbReference type="GO" id="GO:0016887">
    <property type="term" value="F:ATP hydrolysis activity"/>
    <property type="evidence" value="ECO:0007669"/>
    <property type="project" value="RHEA"/>
</dbReference>
<dbReference type="GO" id="GO:0003677">
    <property type="term" value="F:DNA binding"/>
    <property type="evidence" value="ECO:0007669"/>
    <property type="project" value="UniProtKB-KW"/>
</dbReference>
<dbReference type="GO" id="GO:0000725">
    <property type="term" value="P:recombinational repair"/>
    <property type="evidence" value="ECO:0007669"/>
    <property type="project" value="TreeGrafter"/>
</dbReference>
<dbReference type="CDD" id="cd17932">
    <property type="entry name" value="DEXQc_UvrD"/>
    <property type="match status" value="1"/>
</dbReference>
<dbReference type="CDD" id="cd18807">
    <property type="entry name" value="SF1_C_UvrD"/>
    <property type="match status" value="1"/>
</dbReference>
<dbReference type="FunFam" id="1.10.150.80:FF:000002">
    <property type="entry name" value="ATP-dependent DNA helicase RecQ"/>
    <property type="match status" value="1"/>
</dbReference>
<dbReference type="FunFam" id="3.40.50.300:FF:001201">
    <property type="entry name" value="ATP-dependent DNA helicase UvrD2"/>
    <property type="match status" value="1"/>
</dbReference>
<dbReference type="FunFam" id="3.40.50.300:FF:001181">
    <property type="entry name" value="DNA helicase"/>
    <property type="match status" value="1"/>
</dbReference>
<dbReference type="Gene3D" id="1.10.10.160">
    <property type="match status" value="1"/>
</dbReference>
<dbReference type="Gene3D" id="1.10.150.80">
    <property type="entry name" value="HRDC domain"/>
    <property type="match status" value="1"/>
</dbReference>
<dbReference type="Gene3D" id="3.40.50.300">
    <property type="entry name" value="P-loop containing nucleotide triphosphate hydrolases"/>
    <property type="match status" value="3"/>
</dbReference>
<dbReference type="InterPro" id="IPR013986">
    <property type="entry name" value="DExx_box_DNA_helicase_dom_sf"/>
</dbReference>
<dbReference type="InterPro" id="IPR014017">
    <property type="entry name" value="DNA_helicase_UvrD-like_C"/>
</dbReference>
<dbReference type="InterPro" id="IPR000212">
    <property type="entry name" value="DNA_helicase_UvrD/REP"/>
</dbReference>
<dbReference type="InterPro" id="IPR010997">
    <property type="entry name" value="HRDC-like_sf"/>
</dbReference>
<dbReference type="InterPro" id="IPR002121">
    <property type="entry name" value="HRDC_dom"/>
</dbReference>
<dbReference type="InterPro" id="IPR044876">
    <property type="entry name" value="HRDC_dom_sf"/>
</dbReference>
<dbReference type="InterPro" id="IPR027417">
    <property type="entry name" value="P-loop_NTPase"/>
</dbReference>
<dbReference type="InterPro" id="IPR014016">
    <property type="entry name" value="UvrD-like_ATP-bd"/>
</dbReference>
<dbReference type="PANTHER" id="PTHR11070:SF69">
    <property type="entry name" value="ATP-DEPENDENT DNA HELICASE UVRD2"/>
    <property type="match status" value="1"/>
</dbReference>
<dbReference type="PANTHER" id="PTHR11070">
    <property type="entry name" value="UVRD / RECB / PCRA DNA HELICASE FAMILY MEMBER"/>
    <property type="match status" value="1"/>
</dbReference>
<dbReference type="Pfam" id="PF00570">
    <property type="entry name" value="HRDC"/>
    <property type="match status" value="1"/>
</dbReference>
<dbReference type="Pfam" id="PF00580">
    <property type="entry name" value="UvrD-helicase"/>
    <property type="match status" value="1"/>
</dbReference>
<dbReference type="Pfam" id="PF13361">
    <property type="entry name" value="UvrD_C"/>
    <property type="match status" value="2"/>
</dbReference>
<dbReference type="SMART" id="SM00341">
    <property type="entry name" value="HRDC"/>
    <property type="match status" value="1"/>
</dbReference>
<dbReference type="SUPFAM" id="SSF47819">
    <property type="entry name" value="HRDC-like"/>
    <property type="match status" value="1"/>
</dbReference>
<dbReference type="SUPFAM" id="SSF52540">
    <property type="entry name" value="P-loop containing nucleoside triphosphate hydrolases"/>
    <property type="match status" value="1"/>
</dbReference>
<dbReference type="PROSITE" id="PS50967">
    <property type="entry name" value="HRDC"/>
    <property type="match status" value="1"/>
</dbReference>
<dbReference type="PROSITE" id="PS51198">
    <property type="entry name" value="UVRD_HELICASE_ATP_BIND"/>
    <property type="match status" value="1"/>
</dbReference>
<dbReference type="PROSITE" id="PS51217">
    <property type="entry name" value="UVRD_HELICASE_CTER"/>
    <property type="match status" value="1"/>
</dbReference>
<reference key="1">
    <citation type="journal article" date="2003" name="Proc. Natl. Acad. Sci. U.S.A.">
        <title>The complete genome sequence of Mycobacterium bovis.</title>
        <authorList>
            <person name="Garnier T."/>
            <person name="Eiglmeier K."/>
            <person name="Camus J.-C."/>
            <person name="Medina N."/>
            <person name="Mansoor H."/>
            <person name="Pryor M."/>
            <person name="Duthoy S."/>
            <person name="Grondin S."/>
            <person name="Lacroix C."/>
            <person name="Monsempe C."/>
            <person name="Simon S."/>
            <person name="Harris B."/>
            <person name="Atkin R."/>
            <person name="Doggett J."/>
            <person name="Mayes R."/>
            <person name="Keating L."/>
            <person name="Wheeler P.R."/>
            <person name="Parkhill J."/>
            <person name="Barrell B.G."/>
            <person name="Cole S.T."/>
            <person name="Gordon S.V."/>
            <person name="Hewinson R.G."/>
        </authorList>
    </citation>
    <scope>NUCLEOTIDE SEQUENCE [LARGE SCALE GENOMIC DNA]</scope>
    <source>
        <strain>ATCC BAA-935 / AF2122/97</strain>
    </source>
</reference>
<reference key="2">
    <citation type="journal article" date="2017" name="Genome Announc.">
        <title>Updated reference genome sequence and annotation of Mycobacterium bovis AF2122/97.</title>
        <authorList>
            <person name="Malone K.M."/>
            <person name="Farrell D."/>
            <person name="Stuber T.P."/>
            <person name="Schubert O.T."/>
            <person name="Aebersold R."/>
            <person name="Robbe-Austerman S."/>
            <person name="Gordon S.V."/>
        </authorList>
    </citation>
    <scope>NUCLEOTIDE SEQUENCE [LARGE SCALE GENOMIC DNA]</scope>
    <scope>GENOME REANNOTATION</scope>
    <source>
        <strain>ATCC BAA-935 / AF2122/97</strain>
    </source>
</reference>
<evidence type="ECO:0000250" key="1"/>
<evidence type="ECO:0000255" key="2">
    <source>
        <dbReference type="PROSITE-ProRule" id="PRU00328"/>
    </source>
</evidence>
<evidence type="ECO:0000255" key="3">
    <source>
        <dbReference type="PROSITE-ProRule" id="PRU00560"/>
    </source>
</evidence>
<evidence type="ECO:0000255" key="4">
    <source>
        <dbReference type="PROSITE-ProRule" id="PRU00617"/>
    </source>
</evidence>
<evidence type="ECO:0000256" key="5">
    <source>
        <dbReference type="SAM" id="MobiDB-lite"/>
    </source>
</evidence>
<evidence type="ECO:0000305" key="6"/>
<name>UVRD2_MYCBO</name>
<feature type="chain" id="PRO_0000102080" description="ATP-dependent DNA helicase UvrD2">
    <location>
        <begin position="1"/>
        <end position="700"/>
    </location>
</feature>
<feature type="domain" description="UvrD-like helicase ATP-binding" evidence="3">
    <location>
        <begin position="10"/>
        <end position="301"/>
    </location>
</feature>
<feature type="domain" description="UvrD-like helicase C-terminal" evidence="4">
    <location>
        <begin position="302"/>
        <end position="553"/>
    </location>
</feature>
<feature type="domain" description="HRDC" evidence="2">
    <location>
        <begin position="626"/>
        <end position="700"/>
    </location>
</feature>
<feature type="region of interest" description="Disordered" evidence="5">
    <location>
        <begin position="565"/>
        <end position="595"/>
    </location>
</feature>
<feature type="binding site" evidence="3">
    <location>
        <begin position="34"/>
        <end position="39"/>
    </location>
    <ligand>
        <name>ATP</name>
        <dbReference type="ChEBI" id="CHEBI:30616"/>
    </ligand>
</feature>
<feature type="binding site" evidence="1">
    <location>
        <position position="299"/>
    </location>
    <ligand>
        <name>ATP</name>
        <dbReference type="ChEBI" id="CHEBI:30616"/>
    </ligand>
</feature>
<accession>P64321</accession>
<accession>A0A1R3Y3E9</accession>
<accession>O53344</accession>
<accession>X2BMV8</accession>
<keyword id="KW-0067">ATP-binding</keyword>
<keyword id="KW-0227">DNA damage</keyword>
<keyword id="KW-0234">DNA repair</keyword>
<keyword id="KW-0238">DNA-binding</keyword>
<keyword id="KW-0347">Helicase</keyword>
<keyword id="KW-0378">Hydrolase</keyword>
<keyword id="KW-0413">Isomerase</keyword>
<keyword id="KW-0547">Nucleotide-binding</keyword>
<keyword id="KW-1185">Reference proteome</keyword>
<gene>
    <name type="primary">uvrD2</name>
    <name type="ordered locus">BQ2027_MB3222C</name>
</gene>
<sequence>MSIASDPLIAGLDDQQREAVLAPRGPVCVLAGAGTGKTRTITHRIASLVASGHVAAGQVLAVTFTQRAAGEMRSRLRALDAAARTGSGVGAVQALTFHAAAYRQLRYFWSRVIADTGWQLLDSKFAVVARAASRTRLHASTDDVRDLAGEIEWAKASLIGPEEYVTAVAAARRDPPLDAAQIAAVYSEYEALKARGDGVTLLDFDDLLLHTAAAIENDAAVAEEFQDRYRCFVVDEYQDVTPLQQRVLSAWLGDRDDLTVVGDANQTIYSFTGASPRFLLDFSRRFPDAAVVRLERDYRSTPQVVSLANRVIAAARGRVAGSKLRLSGQREPGPVPSFHEHSDEPAEAATVAASIARLIASGTPPSEVAILYRVNAQSEVYEEALTQAGIAYQVRGGEGFFNRQEIKQALLALQRVSERDTDAALSDVVRAVLAPLGLTAQPPVGTRARERWEALTALAELVDDELAQRPALQLPGLLAELRRRAEARHPPVVQGVTLASLHAAKGLEWDAVFLVGLADGTLPISHALAHGPNSEPVEEERRLLYVGITRARVHLALSWALSRSPGGRQSRKPSRFLNGIAPQTRADPVPGTSRRNRGAAARCRICNNELNTSAAVMLRRCETCAADVDEELLLQLKSWRLSTAKEQNVPAYVVFTDNTLIAIAELLPTDDAALIAIPGIGARKLEQYGSDVLQLVRGRT</sequence>
<organism>
    <name type="scientific">Mycobacterium bovis (strain ATCC BAA-935 / AF2122/97)</name>
    <dbReference type="NCBI Taxonomy" id="233413"/>
    <lineage>
        <taxon>Bacteria</taxon>
        <taxon>Bacillati</taxon>
        <taxon>Actinomycetota</taxon>
        <taxon>Actinomycetes</taxon>
        <taxon>Mycobacteriales</taxon>
        <taxon>Mycobacteriaceae</taxon>
        <taxon>Mycobacterium</taxon>
        <taxon>Mycobacterium tuberculosis complex</taxon>
    </lineage>
</organism>
<comment type="function">
    <text evidence="1">DNA-dependent ATPase, stimulated equally by ss- and dsDNA. Has both ATPase and helicase activities (By similarity).</text>
</comment>
<comment type="catalytic activity">
    <reaction>
        <text>Couples ATP hydrolysis with the unwinding of duplex DNA by translocating in the 3'-5' direction.</text>
        <dbReference type="EC" id="5.6.2.4"/>
    </reaction>
</comment>
<comment type="catalytic activity">
    <reaction>
        <text>ATP + H2O = ADP + phosphate + H(+)</text>
        <dbReference type="Rhea" id="RHEA:13065"/>
        <dbReference type="ChEBI" id="CHEBI:15377"/>
        <dbReference type="ChEBI" id="CHEBI:15378"/>
        <dbReference type="ChEBI" id="CHEBI:30616"/>
        <dbReference type="ChEBI" id="CHEBI:43474"/>
        <dbReference type="ChEBI" id="CHEBI:456216"/>
        <dbReference type="EC" id="5.6.2.4"/>
    </reaction>
</comment>
<comment type="cofactor">
    <cofactor evidence="1">
        <name>Mg(2+)</name>
        <dbReference type="ChEBI" id="CHEBI:18420"/>
    </cofactor>
</comment>
<comment type="similarity">
    <text evidence="6">Belongs to the helicase family. UvrD subfamily.</text>
</comment>